<feature type="chain" id="PRO_0000212390" description="Protein yippee-like 3">
    <location>
        <begin position="1"/>
        <end position="119"/>
    </location>
</feature>
<feature type="domain" description="Yippee" evidence="2">
    <location>
        <begin position="19"/>
        <end position="116"/>
    </location>
</feature>
<feature type="binding site" evidence="2">
    <location>
        <position position="23"/>
    </location>
    <ligand>
        <name>Zn(2+)</name>
        <dbReference type="ChEBI" id="CHEBI:29105"/>
    </ligand>
</feature>
<feature type="binding site" evidence="2">
    <location>
        <position position="26"/>
    </location>
    <ligand>
        <name>Zn(2+)</name>
        <dbReference type="ChEBI" id="CHEBI:29105"/>
    </ligand>
</feature>
<feature type="binding site" evidence="2">
    <location>
        <position position="79"/>
    </location>
    <ligand>
        <name>Zn(2+)</name>
        <dbReference type="ChEBI" id="CHEBI:29105"/>
    </ligand>
</feature>
<feature type="binding site" evidence="2">
    <location>
        <position position="82"/>
    </location>
    <ligand>
        <name>Zn(2+)</name>
        <dbReference type="ChEBI" id="CHEBI:29105"/>
    </ligand>
</feature>
<feature type="sequence conflict" description="In Ref. 1; BAB23301." evidence="5" ref="1">
    <original>D</original>
    <variation>N</variation>
    <location>
        <position position="16"/>
    </location>
</feature>
<feature type="sequence conflict" description="In Ref. 1; BAB23301." evidence="5" ref="1">
    <original>H</original>
    <variation>Q</variation>
    <location>
        <position position="25"/>
    </location>
</feature>
<comment type="function">
    <text evidence="3">Involved in proliferation and apoptosis in myeloid precursor cells.</text>
</comment>
<comment type="subcellular location">
    <subcellularLocation>
        <location evidence="1">Nucleus</location>
        <location evidence="1">Nucleolus</location>
    </subcellularLocation>
</comment>
<comment type="tissue specificity">
    <text evidence="3 4">Widely expressed. Strongly expressed in heart, brain, testis, lung, spleen, liver, kidney and myeloid cells.</text>
</comment>
<comment type="induction">
    <text evidence="3">Up-regulated after the removal of interleukin 3 and exposure to granulocyte colony stimulating factor.</text>
</comment>
<comment type="PTM">
    <text>Probably ubiquitinated leading to its degradation by the proteasome.</text>
</comment>
<comment type="similarity">
    <text evidence="5">Belongs to the yippee family.</text>
</comment>
<comment type="sequence caution" evidence="5">
    <conflict type="erroneous initiation">
        <sequence resource="EMBL-CDS" id="AAH09171"/>
    </conflict>
</comment>
<protein>
    <recommendedName>
        <fullName>Protein yippee-like 3</fullName>
    </recommendedName>
    <alternativeName>
        <fullName>Small ubiquitinated apoptotic protein</fullName>
    </alternativeName>
</protein>
<evidence type="ECO:0000250" key="1"/>
<evidence type="ECO:0000255" key="2">
    <source>
        <dbReference type="PROSITE-ProRule" id="PRU01128"/>
    </source>
</evidence>
<evidence type="ECO:0000269" key="3">
    <source>
    </source>
</evidence>
<evidence type="ECO:0000269" key="4">
    <source>
    </source>
</evidence>
<evidence type="ECO:0000305" key="5"/>
<dbReference type="EMBL" id="AF523353">
    <property type="protein sequence ID" value="AAO85716.1"/>
    <property type="molecule type" value="mRNA"/>
</dbReference>
<dbReference type="EMBL" id="AB098742">
    <property type="protein sequence ID" value="BAD51383.1"/>
    <property type="molecule type" value="mRNA"/>
</dbReference>
<dbReference type="EMBL" id="AK002925">
    <property type="protein sequence ID" value="BAB22461.1"/>
    <property type="molecule type" value="mRNA"/>
</dbReference>
<dbReference type="EMBL" id="AK003371">
    <property type="protein sequence ID" value="BAB22745.1"/>
    <property type="molecule type" value="mRNA"/>
</dbReference>
<dbReference type="EMBL" id="AK004431">
    <property type="protein sequence ID" value="BAB23301.1"/>
    <property type="molecule type" value="mRNA"/>
</dbReference>
<dbReference type="EMBL" id="CH466531">
    <property type="protein sequence ID" value="EDL17433.1"/>
    <property type="molecule type" value="Genomic_DNA"/>
</dbReference>
<dbReference type="EMBL" id="CH466531">
    <property type="protein sequence ID" value="EDL17435.1"/>
    <property type="molecule type" value="Genomic_DNA"/>
</dbReference>
<dbReference type="EMBL" id="BC009171">
    <property type="protein sequence ID" value="AAH09171.4"/>
    <property type="status" value="ALT_INIT"/>
    <property type="molecule type" value="mRNA"/>
</dbReference>
<dbReference type="CCDS" id="CCDS21842.1"/>
<dbReference type="RefSeq" id="NP_001366222.1">
    <property type="nucleotide sequence ID" value="NM_001379293.1"/>
</dbReference>
<dbReference type="RefSeq" id="NP_001366223.1">
    <property type="nucleotide sequence ID" value="NM_001379294.1"/>
</dbReference>
<dbReference type="RefSeq" id="NP_001366224.1">
    <property type="nucleotide sequence ID" value="NM_001379295.1"/>
</dbReference>
<dbReference type="RefSeq" id="NP_079623.1">
    <property type="nucleotide sequence ID" value="NM_025347.3"/>
</dbReference>
<dbReference type="RefSeq" id="NP_081151.2">
    <property type="nucleotide sequence ID" value="NM_026875.3"/>
</dbReference>
<dbReference type="SMR" id="P61237"/>
<dbReference type="BioGRID" id="211207">
    <property type="interactions" value="1"/>
</dbReference>
<dbReference type="FunCoup" id="P61237">
    <property type="interactions" value="22"/>
</dbReference>
<dbReference type="STRING" id="10090.ENSMUSP00000101964"/>
<dbReference type="PaxDb" id="10090-ENSMUSP00000037332"/>
<dbReference type="ProteomicsDB" id="299634"/>
<dbReference type="Antibodypedia" id="27015">
    <property type="antibodies" value="76 antibodies from 25 providers"/>
</dbReference>
<dbReference type="DNASU" id="66090"/>
<dbReference type="Ensembl" id="ENSMUST00000038614.12">
    <property type="protein sequence ID" value="ENSMUSP00000037332.6"/>
    <property type="gene ID" value="ENSMUSG00000042675.16"/>
</dbReference>
<dbReference type="Ensembl" id="ENSMUST00000106356.2">
    <property type="protein sequence ID" value="ENSMUSP00000101963.2"/>
    <property type="gene ID" value="ENSMUSG00000042675.16"/>
</dbReference>
<dbReference type="Ensembl" id="ENSMUST00000106357.8">
    <property type="protein sequence ID" value="ENSMUSP00000101964.2"/>
    <property type="gene ID" value="ENSMUSG00000042675.16"/>
</dbReference>
<dbReference type="Ensembl" id="ENSMUST00000170882.8">
    <property type="protein sequence ID" value="ENSMUSP00000128753.2"/>
    <property type="gene ID" value="ENSMUSG00000042675.16"/>
</dbReference>
<dbReference type="GeneID" id="66090"/>
<dbReference type="KEGG" id="mmu:66090"/>
<dbReference type="UCSC" id="uc009jsp.1">
    <property type="organism name" value="mouse"/>
</dbReference>
<dbReference type="AGR" id="MGI:1913340"/>
<dbReference type="CTD" id="83719"/>
<dbReference type="MGI" id="MGI:1913340">
    <property type="gene designation" value="Ypel3"/>
</dbReference>
<dbReference type="VEuPathDB" id="HostDB:ENSMUSG00000042675"/>
<dbReference type="eggNOG" id="KOG3399">
    <property type="taxonomic scope" value="Eukaryota"/>
</dbReference>
<dbReference type="GeneTree" id="ENSGT00940000161514"/>
<dbReference type="HOGENOM" id="CLU_043857_5_2_1"/>
<dbReference type="InParanoid" id="P61237"/>
<dbReference type="OMA" id="CADCRQV"/>
<dbReference type="OrthoDB" id="6407410at2759"/>
<dbReference type="PhylomeDB" id="P61237"/>
<dbReference type="TreeFam" id="TF313936"/>
<dbReference type="BioGRID-ORCS" id="66090">
    <property type="hits" value="2 hits in 77 CRISPR screens"/>
</dbReference>
<dbReference type="ChiTaRS" id="Ypel3">
    <property type="organism name" value="mouse"/>
</dbReference>
<dbReference type="PRO" id="PR:P61237"/>
<dbReference type="Proteomes" id="UP000000589">
    <property type="component" value="Chromosome 7"/>
</dbReference>
<dbReference type="RNAct" id="P61237">
    <property type="molecule type" value="protein"/>
</dbReference>
<dbReference type="Bgee" id="ENSMUSG00000042675">
    <property type="expression patterns" value="Expressed in granulocyte and 260 other cell types or tissues"/>
</dbReference>
<dbReference type="ExpressionAtlas" id="P61237">
    <property type="expression patterns" value="baseline and differential"/>
</dbReference>
<dbReference type="GO" id="GO:0005730">
    <property type="term" value="C:nucleolus"/>
    <property type="evidence" value="ECO:0007669"/>
    <property type="project" value="UniProtKB-SubCell"/>
</dbReference>
<dbReference type="GO" id="GO:0046872">
    <property type="term" value="F:metal ion binding"/>
    <property type="evidence" value="ECO:0007669"/>
    <property type="project" value="UniProtKB-KW"/>
</dbReference>
<dbReference type="GO" id="GO:0006915">
    <property type="term" value="P:apoptotic process"/>
    <property type="evidence" value="ECO:0007669"/>
    <property type="project" value="UniProtKB-KW"/>
</dbReference>
<dbReference type="GO" id="GO:2000774">
    <property type="term" value="P:positive regulation of cellular senescence"/>
    <property type="evidence" value="ECO:0007669"/>
    <property type="project" value="Ensembl"/>
</dbReference>
<dbReference type="InterPro" id="IPR034751">
    <property type="entry name" value="Yippee"/>
</dbReference>
<dbReference type="InterPro" id="IPR004910">
    <property type="entry name" value="Yippee/Mis18/Cereblon"/>
</dbReference>
<dbReference type="InterPro" id="IPR039058">
    <property type="entry name" value="Yippee_fam"/>
</dbReference>
<dbReference type="PANTHER" id="PTHR13848">
    <property type="entry name" value="PROTEIN YIPPEE-LIKE CG15309-RELATED"/>
    <property type="match status" value="1"/>
</dbReference>
<dbReference type="Pfam" id="PF03226">
    <property type="entry name" value="Yippee-Mis18"/>
    <property type="match status" value="1"/>
</dbReference>
<dbReference type="PROSITE" id="PS51792">
    <property type="entry name" value="YIPPEE"/>
    <property type="match status" value="1"/>
</dbReference>
<accession>P61237</accession>
<accession>Q71E85</accession>
<accession>Q9BSJ4</accession>
<accession>Q9CQB6</accession>
<accession>Q9D0U3</accession>
<reference key="1">
    <citation type="journal article" date="2003" name="Cancer Res.">
        <title>Small unstable apoptotic protein, an apoptosis-associated protein, suppresses proliferation of myeloid cells.</title>
        <authorList>
            <person name="Baker S.J."/>
        </authorList>
    </citation>
    <scope>NUCLEOTIDE SEQUENCE [MRNA]</scope>
    <scope>FUNCTION</scope>
    <scope>PROBABLE UBIQUITINATION</scope>
    <scope>TISSUE SPECIFICITY</scope>
    <scope>INDUCTION</scope>
    <source>
        <tissue>Bone marrow</tissue>
    </source>
</reference>
<reference key="2">
    <citation type="journal article" date="2004" name="Gene">
        <title>Identification and characterization of a novel gene family YPEL in a wide spectrum of eukaryotic species.</title>
        <authorList>
            <person name="Hosono K."/>
            <person name="Sasaki T."/>
            <person name="Minoshima S."/>
            <person name="Shimizu N."/>
        </authorList>
    </citation>
    <scope>NUCLEOTIDE SEQUENCE [MRNA]</scope>
    <scope>TISSUE SPECIFICITY</scope>
</reference>
<reference key="3">
    <citation type="journal article" date="2005" name="Science">
        <title>The transcriptional landscape of the mammalian genome.</title>
        <authorList>
            <person name="Carninci P."/>
            <person name="Kasukawa T."/>
            <person name="Katayama S."/>
            <person name="Gough J."/>
            <person name="Frith M.C."/>
            <person name="Maeda N."/>
            <person name="Oyama R."/>
            <person name="Ravasi T."/>
            <person name="Lenhard B."/>
            <person name="Wells C."/>
            <person name="Kodzius R."/>
            <person name="Shimokawa K."/>
            <person name="Bajic V.B."/>
            <person name="Brenner S.E."/>
            <person name="Batalov S."/>
            <person name="Forrest A.R."/>
            <person name="Zavolan M."/>
            <person name="Davis M.J."/>
            <person name="Wilming L.G."/>
            <person name="Aidinis V."/>
            <person name="Allen J.E."/>
            <person name="Ambesi-Impiombato A."/>
            <person name="Apweiler R."/>
            <person name="Aturaliya R.N."/>
            <person name="Bailey T.L."/>
            <person name="Bansal M."/>
            <person name="Baxter L."/>
            <person name="Beisel K.W."/>
            <person name="Bersano T."/>
            <person name="Bono H."/>
            <person name="Chalk A.M."/>
            <person name="Chiu K.P."/>
            <person name="Choudhary V."/>
            <person name="Christoffels A."/>
            <person name="Clutterbuck D.R."/>
            <person name="Crowe M.L."/>
            <person name="Dalla E."/>
            <person name="Dalrymple B.P."/>
            <person name="de Bono B."/>
            <person name="Della Gatta G."/>
            <person name="di Bernardo D."/>
            <person name="Down T."/>
            <person name="Engstrom P."/>
            <person name="Fagiolini M."/>
            <person name="Faulkner G."/>
            <person name="Fletcher C.F."/>
            <person name="Fukushima T."/>
            <person name="Furuno M."/>
            <person name="Futaki S."/>
            <person name="Gariboldi M."/>
            <person name="Georgii-Hemming P."/>
            <person name="Gingeras T.R."/>
            <person name="Gojobori T."/>
            <person name="Green R.E."/>
            <person name="Gustincich S."/>
            <person name="Harbers M."/>
            <person name="Hayashi Y."/>
            <person name="Hensch T.K."/>
            <person name="Hirokawa N."/>
            <person name="Hill D."/>
            <person name="Huminiecki L."/>
            <person name="Iacono M."/>
            <person name="Ikeo K."/>
            <person name="Iwama A."/>
            <person name="Ishikawa T."/>
            <person name="Jakt M."/>
            <person name="Kanapin A."/>
            <person name="Katoh M."/>
            <person name="Kawasawa Y."/>
            <person name="Kelso J."/>
            <person name="Kitamura H."/>
            <person name="Kitano H."/>
            <person name="Kollias G."/>
            <person name="Krishnan S.P."/>
            <person name="Kruger A."/>
            <person name="Kummerfeld S.K."/>
            <person name="Kurochkin I.V."/>
            <person name="Lareau L.F."/>
            <person name="Lazarevic D."/>
            <person name="Lipovich L."/>
            <person name="Liu J."/>
            <person name="Liuni S."/>
            <person name="McWilliam S."/>
            <person name="Madan Babu M."/>
            <person name="Madera M."/>
            <person name="Marchionni L."/>
            <person name="Matsuda H."/>
            <person name="Matsuzawa S."/>
            <person name="Miki H."/>
            <person name="Mignone F."/>
            <person name="Miyake S."/>
            <person name="Morris K."/>
            <person name="Mottagui-Tabar S."/>
            <person name="Mulder N."/>
            <person name="Nakano N."/>
            <person name="Nakauchi H."/>
            <person name="Ng P."/>
            <person name="Nilsson R."/>
            <person name="Nishiguchi S."/>
            <person name="Nishikawa S."/>
            <person name="Nori F."/>
            <person name="Ohara O."/>
            <person name="Okazaki Y."/>
            <person name="Orlando V."/>
            <person name="Pang K.C."/>
            <person name="Pavan W.J."/>
            <person name="Pavesi G."/>
            <person name="Pesole G."/>
            <person name="Petrovsky N."/>
            <person name="Piazza S."/>
            <person name="Reed J."/>
            <person name="Reid J.F."/>
            <person name="Ring B.Z."/>
            <person name="Ringwald M."/>
            <person name="Rost B."/>
            <person name="Ruan Y."/>
            <person name="Salzberg S.L."/>
            <person name="Sandelin A."/>
            <person name="Schneider C."/>
            <person name="Schoenbach C."/>
            <person name="Sekiguchi K."/>
            <person name="Semple C.A."/>
            <person name="Seno S."/>
            <person name="Sessa L."/>
            <person name="Sheng Y."/>
            <person name="Shibata Y."/>
            <person name="Shimada H."/>
            <person name="Shimada K."/>
            <person name="Silva D."/>
            <person name="Sinclair B."/>
            <person name="Sperling S."/>
            <person name="Stupka E."/>
            <person name="Sugiura K."/>
            <person name="Sultana R."/>
            <person name="Takenaka Y."/>
            <person name="Taki K."/>
            <person name="Tammoja K."/>
            <person name="Tan S.L."/>
            <person name="Tang S."/>
            <person name="Taylor M.S."/>
            <person name="Tegner J."/>
            <person name="Teichmann S.A."/>
            <person name="Ueda H.R."/>
            <person name="van Nimwegen E."/>
            <person name="Verardo R."/>
            <person name="Wei C.L."/>
            <person name="Yagi K."/>
            <person name="Yamanishi H."/>
            <person name="Zabarovsky E."/>
            <person name="Zhu S."/>
            <person name="Zimmer A."/>
            <person name="Hide W."/>
            <person name="Bult C."/>
            <person name="Grimmond S.M."/>
            <person name="Teasdale R.D."/>
            <person name="Liu E.T."/>
            <person name="Brusic V."/>
            <person name="Quackenbush J."/>
            <person name="Wahlestedt C."/>
            <person name="Mattick J.S."/>
            <person name="Hume D.A."/>
            <person name="Kai C."/>
            <person name="Sasaki D."/>
            <person name="Tomaru Y."/>
            <person name="Fukuda S."/>
            <person name="Kanamori-Katayama M."/>
            <person name="Suzuki M."/>
            <person name="Aoki J."/>
            <person name="Arakawa T."/>
            <person name="Iida J."/>
            <person name="Imamura K."/>
            <person name="Itoh M."/>
            <person name="Kato T."/>
            <person name="Kawaji H."/>
            <person name="Kawagashira N."/>
            <person name="Kawashima T."/>
            <person name="Kojima M."/>
            <person name="Kondo S."/>
            <person name="Konno H."/>
            <person name="Nakano K."/>
            <person name="Ninomiya N."/>
            <person name="Nishio T."/>
            <person name="Okada M."/>
            <person name="Plessy C."/>
            <person name="Shibata K."/>
            <person name="Shiraki T."/>
            <person name="Suzuki S."/>
            <person name="Tagami M."/>
            <person name="Waki K."/>
            <person name="Watahiki A."/>
            <person name="Okamura-Oho Y."/>
            <person name="Suzuki H."/>
            <person name="Kawai J."/>
            <person name="Hayashizaki Y."/>
        </authorList>
    </citation>
    <scope>NUCLEOTIDE SEQUENCE [LARGE SCALE MRNA]</scope>
    <source>
        <strain>C57BL/6J</strain>
        <tissue>Embryo</tissue>
        <tissue>Kidney</tissue>
    </source>
</reference>
<reference key="4">
    <citation type="submission" date="2005-07" db="EMBL/GenBank/DDBJ databases">
        <authorList>
            <person name="Mural R.J."/>
            <person name="Adams M.D."/>
            <person name="Myers E.W."/>
            <person name="Smith H.O."/>
            <person name="Venter J.C."/>
        </authorList>
    </citation>
    <scope>NUCLEOTIDE SEQUENCE [LARGE SCALE GENOMIC DNA]</scope>
</reference>
<reference key="5">
    <citation type="journal article" date="2004" name="Genome Res.">
        <title>The status, quality, and expansion of the NIH full-length cDNA project: the Mammalian Gene Collection (MGC).</title>
        <authorList>
            <consortium name="The MGC Project Team"/>
        </authorList>
    </citation>
    <scope>NUCLEOTIDE SEQUENCE [LARGE SCALE MRNA]</scope>
    <source>
        <tissue>Mammary tumor</tissue>
    </source>
</reference>
<sequence>MVRISKPKTFQAYLDDCHRRYSCAHCRAHLANHDDLISKSFQGSQGRAYLFNSVVNVGCGPAEERVLLTGLHAVADIHCENCKTTLGWKYEQAFESSQKYKEGKYIIELNHMIKDNGWD</sequence>
<gene>
    <name type="primary">Ypel3</name>
    <name type="synonym">Suap</name>
</gene>
<organism>
    <name type="scientific">Mus musculus</name>
    <name type="common">Mouse</name>
    <dbReference type="NCBI Taxonomy" id="10090"/>
    <lineage>
        <taxon>Eukaryota</taxon>
        <taxon>Metazoa</taxon>
        <taxon>Chordata</taxon>
        <taxon>Craniata</taxon>
        <taxon>Vertebrata</taxon>
        <taxon>Euteleostomi</taxon>
        <taxon>Mammalia</taxon>
        <taxon>Eutheria</taxon>
        <taxon>Euarchontoglires</taxon>
        <taxon>Glires</taxon>
        <taxon>Rodentia</taxon>
        <taxon>Myomorpha</taxon>
        <taxon>Muroidea</taxon>
        <taxon>Muridae</taxon>
        <taxon>Murinae</taxon>
        <taxon>Mus</taxon>
        <taxon>Mus</taxon>
    </lineage>
</organism>
<keyword id="KW-0053">Apoptosis</keyword>
<keyword id="KW-0479">Metal-binding</keyword>
<keyword id="KW-0539">Nucleus</keyword>
<keyword id="KW-1185">Reference proteome</keyword>
<keyword id="KW-0832">Ubl conjugation</keyword>
<keyword id="KW-0862">Zinc</keyword>
<proteinExistence type="evidence at protein level"/>
<name>YPEL3_MOUSE</name>